<comment type="function">
    <text evidence="1">Nucleoside triphosphate pyrophosphatase. May have a dual role in cell division arrest and in preventing the incorporation of modified nucleotides into cellular nucleic acids.</text>
</comment>
<comment type="catalytic activity">
    <reaction evidence="1">
        <text>a ribonucleoside 5'-triphosphate + H2O = a ribonucleoside 5'-phosphate + diphosphate + H(+)</text>
        <dbReference type="Rhea" id="RHEA:23996"/>
        <dbReference type="ChEBI" id="CHEBI:15377"/>
        <dbReference type="ChEBI" id="CHEBI:15378"/>
        <dbReference type="ChEBI" id="CHEBI:33019"/>
        <dbReference type="ChEBI" id="CHEBI:58043"/>
        <dbReference type="ChEBI" id="CHEBI:61557"/>
        <dbReference type="EC" id="3.6.1.9"/>
    </reaction>
</comment>
<comment type="catalytic activity">
    <reaction evidence="1">
        <text>a 2'-deoxyribonucleoside 5'-triphosphate + H2O = a 2'-deoxyribonucleoside 5'-phosphate + diphosphate + H(+)</text>
        <dbReference type="Rhea" id="RHEA:44644"/>
        <dbReference type="ChEBI" id="CHEBI:15377"/>
        <dbReference type="ChEBI" id="CHEBI:15378"/>
        <dbReference type="ChEBI" id="CHEBI:33019"/>
        <dbReference type="ChEBI" id="CHEBI:61560"/>
        <dbReference type="ChEBI" id="CHEBI:65317"/>
        <dbReference type="EC" id="3.6.1.9"/>
    </reaction>
</comment>
<comment type="cofactor">
    <cofactor evidence="1">
        <name>a divalent metal cation</name>
        <dbReference type="ChEBI" id="CHEBI:60240"/>
    </cofactor>
</comment>
<comment type="subcellular location">
    <subcellularLocation>
        <location evidence="1">Cytoplasm</location>
    </subcellularLocation>
</comment>
<comment type="similarity">
    <text evidence="1">Belongs to the Maf family.</text>
</comment>
<keyword id="KW-0963">Cytoplasm</keyword>
<keyword id="KW-0378">Hydrolase</keyword>
<keyword id="KW-0546">Nucleotide metabolism</keyword>
<keyword id="KW-1185">Reference proteome</keyword>
<organism>
    <name type="scientific">Shigella flexneri</name>
    <dbReference type="NCBI Taxonomy" id="623"/>
    <lineage>
        <taxon>Bacteria</taxon>
        <taxon>Pseudomonadati</taxon>
        <taxon>Pseudomonadota</taxon>
        <taxon>Gammaproteobacteria</taxon>
        <taxon>Enterobacterales</taxon>
        <taxon>Enterobacteriaceae</taxon>
        <taxon>Shigella</taxon>
    </lineage>
</organism>
<protein>
    <recommendedName>
        <fullName evidence="1">Nucleoside triphosphate pyrophosphatase</fullName>
        <ecNumber evidence="1">3.6.1.9</ecNumber>
    </recommendedName>
    <alternativeName>
        <fullName evidence="1">Nucleotide pyrophosphatase</fullName>
        <shortName evidence="1">Nucleotide PPase</shortName>
    </alternativeName>
</protein>
<dbReference type="EC" id="3.6.1.9" evidence="1"/>
<dbReference type="EMBL" id="AE005674">
    <property type="protein sequence ID" value="AAN44750.1"/>
    <property type="molecule type" value="Genomic_DNA"/>
</dbReference>
<dbReference type="EMBL" id="AE014073">
    <property type="protein sequence ID" value="AAP18561.1"/>
    <property type="molecule type" value="Genomic_DNA"/>
</dbReference>
<dbReference type="RefSeq" id="WP_000203090.1">
    <property type="nucleotide sequence ID" value="NZ_WPGW01000026.1"/>
</dbReference>
<dbReference type="SMR" id="Q83JE1"/>
<dbReference type="STRING" id="198214.SF3286"/>
<dbReference type="PaxDb" id="198214-SF3286"/>
<dbReference type="KEGG" id="sfl:SF3286"/>
<dbReference type="KEGG" id="sfx:S3503"/>
<dbReference type="PATRIC" id="fig|198214.7.peg.3893"/>
<dbReference type="HOGENOM" id="CLU_040416_2_1_6"/>
<dbReference type="Proteomes" id="UP000001006">
    <property type="component" value="Chromosome"/>
</dbReference>
<dbReference type="Proteomes" id="UP000002673">
    <property type="component" value="Chromosome"/>
</dbReference>
<dbReference type="GO" id="GO:0005737">
    <property type="term" value="C:cytoplasm"/>
    <property type="evidence" value="ECO:0007669"/>
    <property type="project" value="UniProtKB-SubCell"/>
</dbReference>
<dbReference type="GO" id="GO:0047429">
    <property type="term" value="F:nucleoside triphosphate diphosphatase activity"/>
    <property type="evidence" value="ECO:0007669"/>
    <property type="project" value="UniProtKB-EC"/>
</dbReference>
<dbReference type="GO" id="GO:0009117">
    <property type="term" value="P:nucleotide metabolic process"/>
    <property type="evidence" value="ECO:0007669"/>
    <property type="project" value="UniProtKB-KW"/>
</dbReference>
<dbReference type="CDD" id="cd00555">
    <property type="entry name" value="Maf"/>
    <property type="match status" value="1"/>
</dbReference>
<dbReference type="FunFam" id="3.90.950.10:FF:000004">
    <property type="entry name" value="dTTP/UTP pyrophosphatase"/>
    <property type="match status" value="1"/>
</dbReference>
<dbReference type="Gene3D" id="3.90.950.10">
    <property type="match status" value="1"/>
</dbReference>
<dbReference type="HAMAP" id="MF_00528">
    <property type="entry name" value="Maf"/>
    <property type="match status" value="1"/>
</dbReference>
<dbReference type="InterPro" id="IPR029001">
    <property type="entry name" value="ITPase-like_fam"/>
</dbReference>
<dbReference type="InterPro" id="IPR003697">
    <property type="entry name" value="Maf-like"/>
</dbReference>
<dbReference type="NCBIfam" id="TIGR00172">
    <property type="entry name" value="maf"/>
    <property type="match status" value="1"/>
</dbReference>
<dbReference type="PANTHER" id="PTHR43213">
    <property type="entry name" value="BIFUNCTIONAL DTTP/UTP PYROPHOSPHATASE/METHYLTRANSFERASE PROTEIN-RELATED"/>
    <property type="match status" value="1"/>
</dbReference>
<dbReference type="PANTHER" id="PTHR43213:SF5">
    <property type="entry name" value="BIFUNCTIONAL DTTP_UTP PYROPHOSPHATASE_METHYLTRANSFERASE PROTEIN-RELATED"/>
    <property type="match status" value="1"/>
</dbReference>
<dbReference type="Pfam" id="PF02545">
    <property type="entry name" value="Maf"/>
    <property type="match status" value="1"/>
</dbReference>
<dbReference type="PIRSF" id="PIRSF006305">
    <property type="entry name" value="Maf"/>
    <property type="match status" value="1"/>
</dbReference>
<dbReference type="SUPFAM" id="SSF52972">
    <property type="entry name" value="ITPase-like"/>
    <property type="match status" value="1"/>
</dbReference>
<accession>Q83JE1</accession>
<feature type="chain" id="PRO_0000122986" description="Nucleoside triphosphate pyrophosphatase">
    <location>
        <begin position="1"/>
        <end position="197"/>
    </location>
</feature>
<feature type="active site" description="Proton acceptor" evidence="1">
    <location>
        <position position="70"/>
    </location>
</feature>
<reference key="1">
    <citation type="journal article" date="2002" name="Nucleic Acids Res.">
        <title>Genome sequence of Shigella flexneri 2a: insights into pathogenicity through comparison with genomes of Escherichia coli K12 and O157.</title>
        <authorList>
            <person name="Jin Q."/>
            <person name="Yuan Z."/>
            <person name="Xu J."/>
            <person name="Wang Y."/>
            <person name="Shen Y."/>
            <person name="Lu W."/>
            <person name="Wang J."/>
            <person name="Liu H."/>
            <person name="Yang J."/>
            <person name="Yang F."/>
            <person name="Zhang X."/>
            <person name="Zhang J."/>
            <person name="Yang G."/>
            <person name="Wu H."/>
            <person name="Qu D."/>
            <person name="Dong J."/>
            <person name="Sun L."/>
            <person name="Xue Y."/>
            <person name="Zhao A."/>
            <person name="Gao Y."/>
            <person name="Zhu J."/>
            <person name="Kan B."/>
            <person name="Ding K."/>
            <person name="Chen S."/>
            <person name="Cheng H."/>
            <person name="Yao Z."/>
            <person name="He B."/>
            <person name="Chen R."/>
            <person name="Ma D."/>
            <person name="Qiang B."/>
            <person name="Wen Y."/>
            <person name="Hou Y."/>
            <person name="Yu J."/>
        </authorList>
    </citation>
    <scope>NUCLEOTIDE SEQUENCE [LARGE SCALE GENOMIC DNA]</scope>
    <source>
        <strain>301 / Serotype 2a</strain>
    </source>
</reference>
<reference key="2">
    <citation type="journal article" date="2003" name="Infect. Immun.">
        <title>Complete genome sequence and comparative genomics of Shigella flexneri serotype 2a strain 2457T.</title>
        <authorList>
            <person name="Wei J."/>
            <person name="Goldberg M.B."/>
            <person name="Burland V."/>
            <person name="Venkatesan M.M."/>
            <person name="Deng W."/>
            <person name="Fournier G."/>
            <person name="Mayhew G.F."/>
            <person name="Plunkett G. III"/>
            <person name="Rose D.J."/>
            <person name="Darling A."/>
            <person name="Mau B."/>
            <person name="Perna N.T."/>
            <person name="Payne S.M."/>
            <person name="Runyen-Janecky L.J."/>
            <person name="Zhou S."/>
            <person name="Schwartz D.C."/>
            <person name="Blattner F.R."/>
        </authorList>
    </citation>
    <scope>NUCLEOTIDE SEQUENCE [LARGE SCALE GENOMIC DNA]</scope>
    <source>
        <strain>ATCC 700930 / 2457T / Serotype 2a</strain>
    </source>
</reference>
<evidence type="ECO:0000255" key="1">
    <source>
        <dbReference type="HAMAP-Rule" id="MF_00528"/>
    </source>
</evidence>
<sequence length="197" mass="21441">MTSLYLASGSPRRQELLAQLGVTFERIVTGIEEQRQPQESAQQYVVRLAREKAQAGVAQTAQDLPVLGADIIVILNGEVLEKPRDAEHAAQMLRKLSGQTHQVMTAVALADSQHILDCLVVTDVTFRTLTDEDIAGYVASGEPLDKAGAYGIQGLGGCFVRKINGSYHAVVGLPLVETYELLSNFNALREKRDKHDG</sequence>
<proteinExistence type="inferred from homology"/>
<gene>
    <name type="primary">yhdE</name>
    <name type="ordered locus">SF3286</name>
    <name type="ordered locus">S3503</name>
</gene>
<name>NTPP_SHIFL</name>